<sequence length="94" mass="10416">MLKPIGNRVIIEKKEQEQTTKSGIVLTDSAKEKSNEGVIVAVGTGRLLNDGTRVTPEVKEGDRVVFQQYAGTEVKRDNETYLVLNEEDILAVIE</sequence>
<feature type="chain" id="PRO_1000025377" description="Co-chaperonin GroES">
    <location>
        <begin position="1"/>
        <end position="94"/>
    </location>
</feature>
<keyword id="KW-0143">Chaperone</keyword>
<keyword id="KW-0963">Cytoplasm</keyword>
<keyword id="KW-1185">Reference proteome</keyword>
<dbReference type="EMBL" id="CP000253">
    <property type="protein sequence ID" value="ABD31294.1"/>
    <property type="molecule type" value="Genomic_DNA"/>
</dbReference>
<dbReference type="RefSeq" id="WP_000917289.1">
    <property type="nucleotide sequence ID" value="NZ_LS483365.1"/>
</dbReference>
<dbReference type="RefSeq" id="YP_500737.1">
    <property type="nucleotide sequence ID" value="NC_007795.1"/>
</dbReference>
<dbReference type="SMR" id="Q2FWN3"/>
<dbReference type="STRING" id="93061.SAOUHSC_02255"/>
<dbReference type="PaxDb" id="1280-SAXN108_2122"/>
<dbReference type="GeneID" id="3919675"/>
<dbReference type="GeneID" id="98346332"/>
<dbReference type="KEGG" id="sao:SAOUHSC_02255"/>
<dbReference type="PATRIC" id="fig|93061.5.peg.2048"/>
<dbReference type="eggNOG" id="COG0234">
    <property type="taxonomic scope" value="Bacteria"/>
</dbReference>
<dbReference type="HOGENOM" id="CLU_132825_2_1_9"/>
<dbReference type="OrthoDB" id="9806791at2"/>
<dbReference type="PRO" id="PR:Q2FWN3"/>
<dbReference type="Proteomes" id="UP000008816">
    <property type="component" value="Chromosome"/>
</dbReference>
<dbReference type="GO" id="GO:0005737">
    <property type="term" value="C:cytoplasm"/>
    <property type="evidence" value="ECO:0007669"/>
    <property type="project" value="UniProtKB-SubCell"/>
</dbReference>
<dbReference type="GO" id="GO:0005524">
    <property type="term" value="F:ATP binding"/>
    <property type="evidence" value="ECO:0007669"/>
    <property type="project" value="InterPro"/>
</dbReference>
<dbReference type="GO" id="GO:0046872">
    <property type="term" value="F:metal ion binding"/>
    <property type="evidence" value="ECO:0000318"/>
    <property type="project" value="GO_Central"/>
</dbReference>
<dbReference type="GO" id="GO:0044183">
    <property type="term" value="F:protein folding chaperone"/>
    <property type="evidence" value="ECO:0007669"/>
    <property type="project" value="InterPro"/>
</dbReference>
<dbReference type="GO" id="GO:0051087">
    <property type="term" value="F:protein-folding chaperone binding"/>
    <property type="evidence" value="ECO:0000318"/>
    <property type="project" value="GO_Central"/>
</dbReference>
<dbReference type="GO" id="GO:0051082">
    <property type="term" value="F:unfolded protein binding"/>
    <property type="evidence" value="ECO:0000318"/>
    <property type="project" value="GO_Central"/>
</dbReference>
<dbReference type="GO" id="GO:0051085">
    <property type="term" value="P:chaperone cofactor-dependent protein refolding"/>
    <property type="evidence" value="ECO:0000318"/>
    <property type="project" value="GO_Central"/>
</dbReference>
<dbReference type="CDD" id="cd00320">
    <property type="entry name" value="cpn10"/>
    <property type="match status" value="1"/>
</dbReference>
<dbReference type="FunFam" id="2.30.33.40:FF:000001">
    <property type="entry name" value="10 kDa chaperonin"/>
    <property type="match status" value="1"/>
</dbReference>
<dbReference type="Gene3D" id="2.30.33.40">
    <property type="entry name" value="GroES chaperonin"/>
    <property type="match status" value="1"/>
</dbReference>
<dbReference type="HAMAP" id="MF_00580">
    <property type="entry name" value="CH10"/>
    <property type="match status" value="1"/>
</dbReference>
<dbReference type="InterPro" id="IPR020818">
    <property type="entry name" value="Chaperonin_GroES"/>
</dbReference>
<dbReference type="InterPro" id="IPR037124">
    <property type="entry name" value="Chaperonin_GroES_sf"/>
</dbReference>
<dbReference type="InterPro" id="IPR018369">
    <property type="entry name" value="Chaprnonin_Cpn10_CS"/>
</dbReference>
<dbReference type="InterPro" id="IPR011032">
    <property type="entry name" value="GroES-like_sf"/>
</dbReference>
<dbReference type="NCBIfam" id="NF001531">
    <property type="entry name" value="PRK00364.2-2"/>
    <property type="match status" value="1"/>
</dbReference>
<dbReference type="NCBIfam" id="NF001532">
    <property type="entry name" value="PRK00364.2-3"/>
    <property type="match status" value="1"/>
</dbReference>
<dbReference type="NCBIfam" id="NF001533">
    <property type="entry name" value="PRK00364.2-4"/>
    <property type="match status" value="1"/>
</dbReference>
<dbReference type="NCBIfam" id="NF001534">
    <property type="entry name" value="PRK00364.2-5"/>
    <property type="match status" value="1"/>
</dbReference>
<dbReference type="PANTHER" id="PTHR10772">
    <property type="entry name" value="10 KDA HEAT SHOCK PROTEIN"/>
    <property type="match status" value="1"/>
</dbReference>
<dbReference type="PANTHER" id="PTHR10772:SF58">
    <property type="entry name" value="CO-CHAPERONIN GROES"/>
    <property type="match status" value="1"/>
</dbReference>
<dbReference type="Pfam" id="PF00166">
    <property type="entry name" value="Cpn10"/>
    <property type="match status" value="1"/>
</dbReference>
<dbReference type="PRINTS" id="PR00297">
    <property type="entry name" value="CHAPERONIN10"/>
</dbReference>
<dbReference type="SMART" id="SM00883">
    <property type="entry name" value="Cpn10"/>
    <property type="match status" value="1"/>
</dbReference>
<dbReference type="SUPFAM" id="SSF50129">
    <property type="entry name" value="GroES-like"/>
    <property type="match status" value="1"/>
</dbReference>
<dbReference type="PROSITE" id="PS00681">
    <property type="entry name" value="CHAPERONINS_CPN10"/>
    <property type="match status" value="1"/>
</dbReference>
<organism>
    <name type="scientific">Staphylococcus aureus (strain NCTC 8325 / PS 47)</name>
    <dbReference type="NCBI Taxonomy" id="93061"/>
    <lineage>
        <taxon>Bacteria</taxon>
        <taxon>Bacillati</taxon>
        <taxon>Bacillota</taxon>
        <taxon>Bacilli</taxon>
        <taxon>Bacillales</taxon>
        <taxon>Staphylococcaceae</taxon>
        <taxon>Staphylococcus</taxon>
    </lineage>
</organism>
<proteinExistence type="inferred from homology"/>
<accession>Q2FWN3</accession>
<protein>
    <recommendedName>
        <fullName evidence="1">Co-chaperonin GroES</fullName>
    </recommendedName>
    <alternativeName>
        <fullName evidence="1">10 kDa chaperonin</fullName>
    </alternativeName>
    <alternativeName>
        <fullName evidence="1">Chaperonin-10</fullName>
        <shortName evidence="1">Cpn10</shortName>
    </alternativeName>
</protein>
<reference key="1">
    <citation type="book" date="2006" name="Gram positive pathogens, 2nd edition">
        <title>The Staphylococcus aureus NCTC 8325 genome.</title>
        <editorList>
            <person name="Fischetti V."/>
            <person name="Novick R."/>
            <person name="Ferretti J."/>
            <person name="Portnoy D."/>
            <person name="Rood J."/>
        </editorList>
        <authorList>
            <person name="Gillaspy A.F."/>
            <person name="Worrell V."/>
            <person name="Orvis J."/>
            <person name="Roe B.A."/>
            <person name="Dyer D.W."/>
            <person name="Iandolo J.J."/>
        </authorList>
    </citation>
    <scope>NUCLEOTIDE SEQUENCE [LARGE SCALE GENOMIC DNA]</scope>
    <source>
        <strain>NCTC 8325 / PS 47</strain>
    </source>
</reference>
<comment type="function">
    <text evidence="1">Together with the chaperonin GroEL, plays an essential role in assisting protein folding. The GroEL-GroES system forms a nano-cage that allows encapsulation of the non-native substrate proteins and provides a physical environment optimized to promote and accelerate protein folding. GroES binds to the apical surface of the GroEL ring, thereby capping the opening of the GroEL channel.</text>
</comment>
<comment type="subunit">
    <text evidence="1">Heptamer of 7 subunits arranged in a ring. Interacts with the chaperonin GroEL.</text>
</comment>
<comment type="subcellular location">
    <subcellularLocation>
        <location evidence="1">Cytoplasm</location>
    </subcellularLocation>
</comment>
<comment type="similarity">
    <text evidence="1">Belongs to the GroES chaperonin family.</text>
</comment>
<name>CH10_STAA8</name>
<gene>
    <name evidence="1" type="primary">groES</name>
    <name evidence="1" type="synonym">groS</name>
    <name type="ordered locus">SAOUHSC_02255</name>
</gene>
<evidence type="ECO:0000255" key="1">
    <source>
        <dbReference type="HAMAP-Rule" id="MF_00580"/>
    </source>
</evidence>